<protein>
    <recommendedName>
        <fullName evidence="2">Small ribosomal subunit protein uS15c</fullName>
    </recommendedName>
    <alternativeName>
        <fullName>30S ribosomal protein S15, organellar chromatophore</fullName>
    </alternativeName>
</protein>
<dbReference type="EMBL" id="CP000815">
    <property type="protein sequence ID" value="ACB42685.1"/>
    <property type="molecule type" value="Genomic_DNA"/>
</dbReference>
<dbReference type="RefSeq" id="YP_002048895.1">
    <property type="nucleotide sequence ID" value="NC_011087.1"/>
</dbReference>
<dbReference type="SMR" id="B1X416"/>
<dbReference type="GeneID" id="6481273"/>
<dbReference type="GO" id="GO:0022627">
    <property type="term" value="C:cytosolic small ribosomal subunit"/>
    <property type="evidence" value="ECO:0007669"/>
    <property type="project" value="TreeGrafter"/>
</dbReference>
<dbReference type="GO" id="GO:0070111">
    <property type="term" value="C:organellar chromatophore"/>
    <property type="evidence" value="ECO:0007669"/>
    <property type="project" value="UniProtKB-SubCell"/>
</dbReference>
<dbReference type="GO" id="GO:0009536">
    <property type="term" value="C:plastid"/>
    <property type="evidence" value="ECO:0007669"/>
    <property type="project" value="UniProtKB-KW"/>
</dbReference>
<dbReference type="GO" id="GO:0003735">
    <property type="term" value="F:structural constituent of ribosome"/>
    <property type="evidence" value="ECO:0007669"/>
    <property type="project" value="InterPro"/>
</dbReference>
<dbReference type="GO" id="GO:0006412">
    <property type="term" value="P:translation"/>
    <property type="evidence" value="ECO:0007669"/>
    <property type="project" value="InterPro"/>
</dbReference>
<dbReference type="CDD" id="cd00353">
    <property type="entry name" value="Ribosomal_S15p_S13e"/>
    <property type="match status" value="1"/>
</dbReference>
<dbReference type="FunFam" id="1.10.287.10:FF:000002">
    <property type="entry name" value="30S ribosomal protein S15"/>
    <property type="match status" value="1"/>
</dbReference>
<dbReference type="Gene3D" id="6.10.250.3130">
    <property type="match status" value="1"/>
</dbReference>
<dbReference type="Gene3D" id="1.10.287.10">
    <property type="entry name" value="S15/NS1, RNA-binding"/>
    <property type="match status" value="1"/>
</dbReference>
<dbReference type="HAMAP" id="MF_01343_B">
    <property type="entry name" value="Ribosomal_uS15_B"/>
    <property type="match status" value="1"/>
</dbReference>
<dbReference type="InterPro" id="IPR000589">
    <property type="entry name" value="Ribosomal_uS15"/>
</dbReference>
<dbReference type="InterPro" id="IPR005290">
    <property type="entry name" value="Ribosomal_uS15_bac-type"/>
</dbReference>
<dbReference type="InterPro" id="IPR009068">
    <property type="entry name" value="uS15_NS1_RNA-bd_sf"/>
</dbReference>
<dbReference type="NCBIfam" id="TIGR00952">
    <property type="entry name" value="S15_bact"/>
    <property type="match status" value="1"/>
</dbReference>
<dbReference type="PANTHER" id="PTHR23321">
    <property type="entry name" value="RIBOSOMAL PROTEIN S15, BACTERIAL AND ORGANELLAR"/>
    <property type="match status" value="1"/>
</dbReference>
<dbReference type="PANTHER" id="PTHR23321:SF26">
    <property type="entry name" value="SMALL RIBOSOMAL SUBUNIT PROTEIN US15M"/>
    <property type="match status" value="1"/>
</dbReference>
<dbReference type="Pfam" id="PF00312">
    <property type="entry name" value="Ribosomal_S15"/>
    <property type="match status" value="1"/>
</dbReference>
<dbReference type="SMART" id="SM01387">
    <property type="entry name" value="Ribosomal_S15"/>
    <property type="match status" value="1"/>
</dbReference>
<dbReference type="SUPFAM" id="SSF47060">
    <property type="entry name" value="S15/NS1 RNA-binding domain"/>
    <property type="match status" value="1"/>
</dbReference>
<dbReference type="PROSITE" id="PS00362">
    <property type="entry name" value="RIBOSOMAL_S15"/>
    <property type="match status" value="1"/>
</dbReference>
<organism>
    <name type="scientific">Paulinella chromatophora</name>
    <dbReference type="NCBI Taxonomy" id="39717"/>
    <lineage>
        <taxon>Eukaryota</taxon>
        <taxon>Sar</taxon>
        <taxon>Rhizaria</taxon>
        <taxon>Cercozoa</taxon>
        <taxon>Imbricatea</taxon>
        <taxon>Silicofilosea</taxon>
        <taxon>Euglyphida</taxon>
        <taxon>Paulinellidae</taxon>
        <taxon>Paulinella</taxon>
    </lineage>
</organism>
<evidence type="ECO:0000250" key="1"/>
<evidence type="ECO:0000305" key="2"/>
<name>RR15_PAUCH</name>
<accession>B1X416</accession>
<gene>
    <name type="primary">rps15</name>
    <name type="ordered locus">PCC_0236</name>
</gene>
<feature type="chain" id="PRO_0000354280" description="Small ribosomal subunit protein uS15c">
    <location>
        <begin position="1"/>
        <end position="89"/>
    </location>
</feature>
<proteinExistence type="inferred from homology"/>
<geneLocation type="organellar chromatophore"/>
<comment type="subunit">
    <text evidence="1">Part of the 30S ribosomal subunit.</text>
</comment>
<comment type="subcellular location">
    <subcellularLocation>
        <location>Plastid</location>
        <location>Organellar chromatophore</location>
    </subcellularLocation>
</comment>
<comment type="similarity">
    <text evidence="2">Belongs to the universal ribosomal protein uS15 family.</text>
</comment>
<keyword id="KW-0994">Organellar chromatophore</keyword>
<keyword id="KW-0934">Plastid</keyword>
<keyword id="KW-0687">Ribonucleoprotein</keyword>
<keyword id="KW-0689">Ribosomal protein</keyword>
<reference key="1">
    <citation type="journal article" date="2008" name="Curr. Biol.">
        <title>Chromatophore genome sequence of Paulinella sheds light on acquisition of photosynthesis by eukaryotes.</title>
        <authorList>
            <person name="Nowack E.C.M."/>
            <person name="Melkonian M."/>
            <person name="Gloeckner G."/>
        </authorList>
    </citation>
    <scope>NUCLEOTIDE SEQUENCE [LARGE SCALE GENOMIC DNA]</scope>
</reference>
<sequence length="89" mass="10187">MPLDTTTKQKLINVHQTHSTDTGSVEVQVAMLTERISKLSGHLQQNKHDFSSRQGLLKMIGRRKRLLNYLRSLGEDRYSQLINKLGIRG</sequence>